<reference key="1">
    <citation type="journal article" date="2004" name="Proc. Natl. Acad. Sci. U.S.A.">
        <title>The diploid genome sequence of Candida albicans.</title>
        <authorList>
            <person name="Jones T."/>
            <person name="Federspiel N.A."/>
            <person name="Chibana H."/>
            <person name="Dungan J."/>
            <person name="Kalman S."/>
            <person name="Magee B.B."/>
            <person name="Newport G."/>
            <person name="Thorstenson Y.R."/>
            <person name="Agabian N."/>
            <person name="Magee P.T."/>
            <person name="Davis R.W."/>
            <person name="Scherer S."/>
        </authorList>
    </citation>
    <scope>NUCLEOTIDE SEQUENCE [LARGE SCALE GENOMIC DNA]</scope>
    <source>
        <strain>SC5314 / ATCC MYA-2876</strain>
    </source>
</reference>
<reference key="2">
    <citation type="journal article" date="2007" name="Genome Biol.">
        <title>Assembly of the Candida albicans genome into sixteen supercontigs aligned on the eight chromosomes.</title>
        <authorList>
            <person name="van het Hoog M."/>
            <person name="Rast T.J."/>
            <person name="Martchenko M."/>
            <person name="Grindle S."/>
            <person name="Dignard D."/>
            <person name="Hogues H."/>
            <person name="Cuomo C."/>
            <person name="Berriman M."/>
            <person name="Scherer S."/>
            <person name="Magee B.B."/>
            <person name="Whiteway M."/>
            <person name="Chibana H."/>
            <person name="Nantel A."/>
            <person name="Magee P.T."/>
        </authorList>
    </citation>
    <scope>GENOME REANNOTATION</scope>
    <source>
        <strain>SC5314 / ATCC MYA-2876</strain>
    </source>
</reference>
<reference key="3">
    <citation type="journal article" date="2013" name="Genome Biol.">
        <title>Assembly of a phased diploid Candida albicans genome facilitates allele-specific measurements and provides a simple model for repeat and indel structure.</title>
        <authorList>
            <person name="Muzzey D."/>
            <person name="Schwartz K."/>
            <person name="Weissman J.S."/>
            <person name="Sherlock G."/>
        </authorList>
    </citation>
    <scope>NUCLEOTIDE SEQUENCE [LARGE SCALE GENOMIC DNA]</scope>
    <scope>GENOME REANNOTATION</scope>
    <source>
        <strain>SC5314 / ATCC MYA-2876</strain>
    </source>
</reference>
<reference key="4">
    <citation type="journal article" date="2008" name="J. Biol. Chem.">
        <title>Identification of a new family of genes involved in beta-1,2-mannosylation of glycans in Pichia pastoris and Candida albicans.</title>
        <authorList>
            <person name="Mille C."/>
            <person name="Bobrowicz P."/>
            <person name="Trinel P.A."/>
            <person name="Li H."/>
            <person name="Maes E."/>
            <person name="Guerardel Y."/>
            <person name="Fradin C."/>
            <person name="Martinez-Esparza M."/>
            <person name="Davidson R.C."/>
            <person name="Janbon G."/>
            <person name="Poulain D."/>
            <person name="Wildt S."/>
        </authorList>
    </citation>
    <scope>IDENTIFICATION</scope>
</reference>
<reference key="5">
    <citation type="journal article" date="2011" name="Cell Host Microbe">
        <title>An iron homeostasis regulatory circuit with reciprocal roles in Candida albicans commensalism and pathogenesis.</title>
        <authorList>
            <person name="Chen C."/>
            <person name="Pande K."/>
            <person name="French S.D."/>
            <person name="Tuch B.B."/>
            <person name="Noble S.M."/>
        </authorList>
    </citation>
    <scope>INDUCTION</scope>
</reference>
<reference key="6">
    <citation type="journal article" date="2011" name="J. Biol. Chem.">
        <title>Cap2-HAP complex is a critical transcriptional regulator that has dual but contrasting roles in regulation of iron homeostasis in Candida albicans.</title>
        <authorList>
            <person name="Singh R.P."/>
            <person name="Prasad H.K."/>
            <person name="Sinha I."/>
            <person name="Agarwal N."/>
            <person name="Natarajan K."/>
        </authorList>
    </citation>
    <scope>INDUCTION</scope>
</reference>
<accession>Q5AMH3</accession>
<accession>A0A1D8PL96</accession>
<keyword id="KW-0961">Cell wall biogenesis/degradation</keyword>
<keyword id="KW-0325">Glycoprotein</keyword>
<keyword id="KW-0328">Glycosyltransferase</keyword>
<keyword id="KW-0472">Membrane</keyword>
<keyword id="KW-1185">Reference proteome</keyword>
<keyword id="KW-0735">Signal-anchor</keyword>
<keyword id="KW-0808">Transferase</keyword>
<keyword id="KW-0812">Transmembrane</keyword>
<keyword id="KW-1133">Transmembrane helix</keyword>
<gene>
    <name type="primary">BMT9</name>
    <name type="synonym">WRY5</name>
    <name type="ordered locus">CAALFM_C401170CA</name>
    <name type="ORF">CaO19.12143</name>
    <name type="ORF">CaO19.4673</name>
</gene>
<comment type="function">
    <text evidence="1">Beta-mannosyltransferase involved in cell wall biosynthesis through beta-1,2-mannosylation of cell wall phosphopeptidomannan.</text>
</comment>
<comment type="subcellular location">
    <subcellularLocation>
        <location evidence="7">Membrane</location>
        <topology evidence="7">Single-pass type II membrane protein</topology>
    </subcellularLocation>
</comment>
<comment type="induction">
    <text evidence="5 6">Expression is regulated by SEF1, SFU1, and HAP43.</text>
</comment>
<comment type="similarity">
    <text evidence="7">Belongs to the BMT family.</text>
</comment>
<organism>
    <name type="scientific">Candida albicans (strain SC5314 / ATCC MYA-2876)</name>
    <name type="common">Yeast</name>
    <dbReference type="NCBI Taxonomy" id="237561"/>
    <lineage>
        <taxon>Eukaryota</taxon>
        <taxon>Fungi</taxon>
        <taxon>Dikarya</taxon>
        <taxon>Ascomycota</taxon>
        <taxon>Saccharomycotina</taxon>
        <taxon>Pichiomycetes</taxon>
        <taxon>Debaryomycetaceae</taxon>
        <taxon>Candida/Lodderomyces clade</taxon>
        <taxon>Candida</taxon>
    </lineage>
</organism>
<proteinExistence type="evidence at transcript level"/>
<feature type="chain" id="PRO_0000426077" description="Beta-mannosyltransferase 9">
    <location>
        <begin position="1"/>
        <end position="782"/>
    </location>
</feature>
<feature type="topological domain" description="Cytoplasmic" evidence="7">
    <location>
        <begin position="1"/>
        <end position="26"/>
    </location>
</feature>
<feature type="transmembrane region" description="Helical" evidence="2">
    <location>
        <begin position="27"/>
        <end position="47"/>
    </location>
</feature>
<feature type="topological domain" description="Extracellular" evidence="7">
    <location>
        <begin position="48"/>
        <end position="782"/>
    </location>
</feature>
<feature type="region of interest" description="Disordered" evidence="4">
    <location>
        <begin position="66"/>
        <end position="96"/>
    </location>
</feature>
<feature type="compositionally biased region" description="Basic and acidic residues" evidence="4">
    <location>
        <begin position="76"/>
        <end position="96"/>
    </location>
</feature>
<feature type="glycosylation site" description="N-linked (GlcNAc...) asparagine" evidence="3">
    <location>
        <position position="445"/>
    </location>
</feature>
<feature type="glycosylation site" description="N-linked (GlcNAc...) asparagine" evidence="3">
    <location>
        <position position="648"/>
    </location>
</feature>
<feature type="glycosylation site" description="N-linked (GlcNAc...) asparagine" evidence="3">
    <location>
        <position position="699"/>
    </location>
</feature>
<name>BMT9_CANAL</name>
<protein>
    <recommendedName>
        <fullName>Beta-mannosyltransferase 9</fullName>
        <ecNumber>2.4.1.-</ecNumber>
    </recommendedName>
    <alternativeName>
        <fullName>WRY family protein 5</fullName>
    </alternativeName>
</protein>
<sequence length="782" mass="89915">MEKLIQSTISLFISLSLKISTKSYKSIISILFIISLLSIILTTTITVYHDPERIITTTTTTTSASKSVFTASSPKQQDKLQQEIDQHQSDNSHEQQGKRIIIFPNNFPLIKNDQLVKYYIDTMNQALQPHDLIYRNCFEYKIPQLSYSSQKIDVFSDGGGGDQSGIKCRKLSSQVNVKVSPAINKNGNMRQILTRFMQDDGLYFQEFLPFFPNLKEQLQSADDDIINKHWYQFIGSTVWLQQYGVHLMISRIIYTEVDQGLPIISLAYLQLFDRNWNELNDVELIIPDYETTTTTTTQSKYKYKSIIYPYFAPIPIYHNVKQLNTGKFFGVEDPRIMLITNEFGFEEPIIIYNSHHRKISNIDYENGGDNQGKINFKNYRSLFIGWLWKTQIGKFNLEQLPSEHTLDNHKANKNDANNNDYSKNEYIKIKELTRPNNQRNLLEKNWSLFLNHQEKLNHGYHSFIYFIYQFKDLKILKCPLSSSTTKKNNDGDDRFDSGCQWEYQINDDDNFGSGYLHGGTELINVNELLDNYLSKSSTSTSINGKQLTNSIKDRLPLNRQIWIGFARAAMRHCGCSETMYRPNMVILVKDDVPTNTNIASGKSNYRLTHVSSFMDLGIEVLPWWEDKGLCEGKNVVIPNGISSWTIENESNNLESESSTITSNNLVDYLTITITRRDTTIDLVYIKGLLNALLLNPDNNNSNNDVDDTEEGSSIFKSSVLFNVDLVKDYSSTTTTTTTKNVNKNLDCALQYSHKYCQIYGEKLKIEDEFNNKGKDKGKDKSN</sequence>
<dbReference type="EC" id="2.4.1.-"/>
<dbReference type="EMBL" id="CP017626">
    <property type="protein sequence ID" value="AOW28903.1"/>
    <property type="molecule type" value="Genomic_DNA"/>
</dbReference>
<dbReference type="RefSeq" id="XP_722742.2">
    <property type="nucleotide sequence ID" value="XM_717649.2"/>
</dbReference>
<dbReference type="STRING" id="237561.Q5AMH3"/>
<dbReference type="CAZy" id="GT91">
    <property type="family name" value="Glycosyltransferase Family 91"/>
</dbReference>
<dbReference type="GlyCosmos" id="Q5AMH3">
    <property type="glycosylation" value="3 sites, No reported glycans"/>
</dbReference>
<dbReference type="EnsemblFungi" id="C4_01170C_A-T">
    <property type="protein sequence ID" value="C4_01170C_A-T-p1"/>
    <property type="gene ID" value="C4_01170C_A"/>
</dbReference>
<dbReference type="GeneID" id="3635654"/>
<dbReference type="KEGG" id="cal:CAALFM_C401170CA"/>
<dbReference type="CGD" id="CAL0000183827">
    <property type="gene designation" value="BMT9"/>
</dbReference>
<dbReference type="VEuPathDB" id="FungiDB:C4_01170C_A"/>
<dbReference type="eggNOG" id="ENOG502QTZG">
    <property type="taxonomic scope" value="Eukaryota"/>
</dbReference>
<dbReference type="HOGENOM" id="CLU_707868_0_0_1"/>
<dbReference type="InParanoid" id="Q5AMH3"/>
<dbReference type="OrthoDB" id="4015986at2759"/>
<dbReference type="PRO" id="PR:Q5AMH3"/>
<dbReference type="Proteomes" id="UP000000559">
    <property type="component" value="Chromosome 4"/>
</dbReference>
<dbReference type="GO" id="GO:0016020">
    <property type="term" value="C:membrane"/>
    <property type="evidence" value="ECO:0007669"/>
    <property type="project" value="UniProtKB-SubCell"/>
</dbReference>
<dbReference type="GO" id="GO:0000030">
    <property type="term" value="F:mannosyltransferase activity"/>
    <property type="evidence" value="ECO:0007669"/>
    <property type="project" value="InterPro"/>
</dbReference>
<dbReference type="GO" id="GO:0071555">
    <property type="term" value="P:cell wall organization"/>
    <property type="evidence" value="ECO:0007669"/>
    <property type="project" value="UniProtKB-KW"/>
</dbReference>
<dbReference type="InterPro" id="IPR021988">
    <property type="entry name" value="BMT1"/>
</dbReference>
<dbReference type="Pfam" id="PF12141">
    <property type="entry name" value="BMT"/>
    <property type="match status" value="1"/>
</dbReference>
<evidence type="ECO:0000250" key="1"/>
<evidence type="ECO:0000255" key="2"/>
<evidence type="ECO:0000255" key="3">
    <source>
        <dbReference type="PROSITE-ProRule" id="PRU00498"/>
    </source>
</evidence>
<evidence type="ECO:0000256" key="4">
    <source>
        <dbReference type="SAM" id="MobiDB-lite"/>
    </source>
</evidence>
<evidence type="ECO:0000269" key="5">
    <source>
    </source>
</evidence>
<evidence type="ECO:0000269" key="6">
    <source>
    </source>
</evidence>
<evidence type="ECO:0000305" key="7"/>